<sequence length="736" mass="83630">MFRFAQPANVLKGKAPSQIVPPHPKTNSFVHPSAHPLKFNPNSAMTVEVPTHQNGPASNNQYNGNHSRPHFKNQFSSRNSSFTNVMNYGKNHGNNNMSPDSPWYNEVVAFEDCVSQTLYMSQTPRRSNMRNNGNNNMNNGRRTEHPNTQANPLFWDSIGRAMGLYHDLINTPELNSDRVSKLVHLLHNGLRANRNQLTRMNKKPDYDSQSFHKEMTNYLCKSLREISEDVLNGKVELNEYGAMHLITAFKELLLFQEAVNIWKSAINGSNNYTSNIFLNPRVVGVILPILYENGVSYPEIQSLYEKSSSMINYFHPNLSVGMIRASLSASENQMALKLFQKLCEESTEMKYGYLIETHLSFIGECKDLNVAQAFFDKALNDEMPYKIDLQVSYVKSFLKNIWSQTGDFNHIYQIWYKSSLHYGRHVNHGISSSLNDTFFDIFFENYANDKVQGFPMLQNIIQNYHNMKNIDEPFFNIILAKCTVWHDRTILEYIDNSYDAFNIPKTIVAYRILLKSMGSIDDVTTQEILQRWINLICKSDEIGQRFIANADWAALRDATVTWTQRNRGISSSSPMSAVNSLAPSTTNTPSPSLSPIPDRDTLSSARNTPNKIWSGTPVPPPSTEMDFYSHPAFQAANASGAFDDMASATVNPTPRKNFTNGIVPNTPQPIDDRMVLYLKIVKRYSPFCRDSRQLARLTTGTAVKYSVLQEVLNQFQSLNVNDIPVPELRNLKPTCV</sequence>
<dbReference type="EMBL" id="CR380957">
    <property type="protein sequence ID" value="CAG61489.1"/>
    <property type="molecule type" value="Genomic_DNA"/>
</dbReference>
<dbReference type="RefSeq" id="XP_448528.1">
    <property type="nucleotide sequence ID" value="XM_448528.1"/>
</dbReference>
<dbReference type="SMR" id="Q6FML6"/>
<dbReference type="FunCoup" id="Q6FML6">
    <property type="interactions" value="64"/>
</dbReference>
<dbReference type="STRING" id="284593.Q6FML6"/>
<dbReference type="EnsemblFungi" id="CAGL0K07007g-T">
    <property type="protein sequence ID" value="CAGL0K07007g-T-p1"/>
    <property type="gene ID" value="CAGL0K07007g"/>
</dbReference>
<dbReference type="KEGG" id="cgr:2890387"/>
<dbReference type="CGD" id="CAL0134107">
    <property type="gene designation" value="CAGL0K07007g"/>
</dbReference>
<dbReference type="VEuPathDB" id="FungiDB:B1J91_K07007g"/>
<dbReference type="VEuPathDB" id="FungiDB:CAGL0K07007g"/>
<dbReference type="eggNOG" id="ENOG502QUSW">
    <property type="taxonomic scope" value="Eukaryota"/>
</dbReference>
<dbReference type="HOGENOM" id="CLU_019840_0_0_1"/>
<dbReference type="InParanoid" id="Q6FML6"/>
<dbReference type="OMA" id="EMKYGYL"/>
<dbReference type="Proteomes" id="UP000002428">
    <property type="component" value="Chromosome K"/>
</dbReference>
<dbReference type="GO" id="GO:0005743">
    <property type="term" value="C:mitochondrial inner membrane"/>
    <property type="evidence" value="ECO:0007669"/>
    <property type="project" value="UniProtKB-SubCell"/>
</dbReference>
<dbReference type="GO" id="GO:0000932">
    <property type="term" value="C:P-body"/>
    <property type="evidence" value="ECO:0007669"/>
    <property type="project" value="EnsemblFungi"/>
</dbReference>
<dbReference type="GO" id="GO:0009060">
    <property type="term" value="P:aerobic respiration"/>
    <property type="evidence" value="ECO:0007669"/>
    <property type="project" value="EnsemblFungi"/>
</dbReference>
<comment type="function">
    <text evidence="1">May be involved in the processing or stability of mitochondrial mRNAs.</text>
</comment>
<comment type="subunit">
    <text evidence="1">Monomer.</text>
</comment>
<comment type="subcellular location">
    <subcellularLocation>
        <location evidence="1">Mitochondrion inner membrane</location>
        <topology evidence="1">Peripheral membrane protein</topology>
        <orientation evidence="1">Matrix side</orientation>
    </subcellularLocation>
</comment>
<comment type="PTM">
    <text evidence="1">Phosphorylated. Phosphorylation promotes binding to RNA.</text>
</comment>
<comment type="similarity">
    <text evidence="4">Belongs to the RMD9 family.</text>
</comment>
<proteinExistence type="inferred from homology"/>
<evidence type="ECO:0000250" key="1">
    <source>
        <dbReference type="UniProtKB" id="P53140"/>
    </source>
</evidence>
<evidence type="ECO:0000255" key="2"/>
<evidence type="ECO:0000256" key="3">
    <source>
        <dbReference type="SAM" id="MobiDB-lite"/>
    </source>
</evidence>
<evidence type="ECO:0000305" key="4"/>
<gene>
    <name type="ordered locus">CAGL0K07007g</name>
</gene>
<organism>
    <name type="scientific">Candida glabrata (strain ATCC 2001 / BCRC 20586 / JCM 3761 / NBRC 0622 / NRRL Y-65 / CBS 138)</name>
    <name type="common">Yeast</name>
    <name type="synonym">Nakaseomyces glabratus</name>
    <dbReference type="NCBI Taxonomy" id="284593"/>
    <lineage>
        <taxon>Eukaryota</taxon>
        <taxon>Fungi</taxon>
        <taxon>Dikarya</taxon>
        <taxon>Ascomycota</taxon>
        <taxon>Saccharomycotina</taxon>
        <taxon>Saccharomycetes</taxon>
        <taxon>Saccharomycetales</taxon>
        <taxon>Saccharomycetaceae</taxon>
        <taxon>Nakaseomyces</taxon>
    </lineage>
</organism>
<keyword id="KW-0472">Membrane</keyword>
<keyword id="KW-0496">Mitochondrion</keyword>
<keyword id="KW-0999">Mitochondrion inner membrane</keyword>
<keyword id="KW-0597">Phosphoprotein</keyword>
<keyword id="KW-1185">Reference proteome</keyword>
<keyword id="KW-0809">Transit peptide</keyword>
<reference key="1">
    <citation type="journal article" date="2004" name="Nature">
        <title>Genome evolution in yeasts.</title>
        <authorList>
            <person name="Dujon B."/>
            <person name="Sherman D."/>
            <person name="Fischer G."/>
            <person name="Durrens P."/>
            <person name="Casaregola S."/>
            <person name="Lafontaine I."/>
            <person name="de Montigny J."/>
            <person name="Marck C."/>
            <person name="Neuveglise C."/>
            <person name="Talla E."/>
            <person name="Goffard N."/>
            <person name="Frangeul L."/>
            <person name="Aigle M."/>
            <person name="Anthouard V."/>
            <person name="Babour A."/>
            <person name="Barbe V."/>
            <person name="Barnay S."/>
            <person name="Blanchin S."/>
            <person name="Beckerich J.-M."/>
            <person name="Beyne E."/>
            <person name="Bleykasten C."/>
            <person name="Boisrame A."/>
            <person name="Boyer J."/>
            <person name="Cattolico L."/>
            <person name="Confanioleri F."/>
            <person name="de Daruvar A."/>
            <person name="Despons L."/>
            <person name="Fabre E."/>
            <person name="Fairhead C."/>
            <person name="Ferry-Dumazet H."/>
            <person name="Groppi A."/>
            <person name="Hantraye F."/>
            <person name="Hennequin C."/>
            <person name="Jauniaux N."/>
            <person name="Joyet P."/>
            <person name="Kachouri R."/>
            <person name="Kerrest A."/>
            <person name="Koszul R."/>
            <person name="Lemaire M."/>
            <person name="Lesur I."/>
            <person name="Ma L."/>
            <person name="Muller H."/>
            <person name="Nicaud J.-M."/>
            <person name="Nikolski M."/>
            <person name="Oztas S."/>
            <person name="Ozier-Kalogeropoulos O."/>
            <person name="Pellenz S."/>
            <person name="Potier S."/>
            <person name="Richard G.-F."/>
            <person name="Straub M.-L."/>
            <person name="Suleau A."/>
            <person name="Swennen D."/>
            <person name="Tekaia F."/>
            <person name="Wesolowski-Louvel M."/>
            <person name="Westhof E."/>
            <person name="Wirth B."/>
            <person name="Zeniou-Meyer M."/>
            <person name="Zivanovic Y."/>
            <person name="Bolotin-Fukuhara M."/>
            <person name="Thierry A."/>
            <person name="Bouchier C."/>
            <person name="Caudron B."/>
            <person name="Scarpelli C."/>
            <person name="Gaillardin C."/>
            <person name="Weissenbach J."/>
            <person name="Wincker P."/>
            <person name="Souciet J.-L."/>
        </authorList>
    </citation>
    <scope>NUCLEOTIDE SEQUENCE [LARGE SCALE GENOMIC DNA]</scope>
    <source>
        <strain>ATCC 2001 / BCRC 20586 / JCM 3761 / NBRC 0622 / NRRL Y-65 / CBS 138</strain>
    </source>
</reference>
<accession>Q6FML6</accession>
<feature type="transit peptide" description="Mitochondrion" evidence="2">
    <location>
        <begin position="1"/>
        <end position="79"/>
    </location>
</feature>
<feature type="chain" id="PRO_0000301789" description="RNA-binding protein RMD9-like, mitochondrial">
    <location>
        <begin position="80"/>
        <end position="736"/>
    </location>
</feature>
<feature type="region of interest" description="Disordered" evidence="3">
    <location>
        <begin position="1"/>
        <end position="28"/>
    </location>
</feature>
<feature type="region of interest" description="Disordered" evidence="3">
    <location>
        <begin position="124"/>
        <end position="148"/>
    </location>
</feature>
<feature type="region of interest" description="Disordered" evidence="3">
    <location>
        <begin position="566"/>
        <end position="618"/>
    </location>
</feature>
<feature type="compositionally biased region" description="Low complexity" evidence="3">
    <location>
        <begin position="125"/>
        <end position="140"/>
    </location>
</feature>
<feature type="compositionally biased region" description="Polar residues" evidence="3">
    <location>
        <begin position="566"/>
        <end position="578"/>
    </location>
</feature>
<feature type="compositionally biased region" description="Low complexity" evidence="3">
    <location>
        <begin position="579"/>
        <end position="596"/>
    </location>
</feature>
<feature type="compositionally biased region" description="Polar residues" evidence="3">
    <location>
        <begin position="602"/>
        <end position="613"/>
    </location>
</feature>
<name>RMD9L_CANGA</name>
<protein>
    <recommendedName>
        <fullName evidence="1">RNA-binding protein RMD9-like, mitochondrial</fullName>
    </recommendedName>
</protein>